<accession>C5B9D6</accession>
<organism>
    <name type="scientific">Edwardsiella ictaluri (strain 93-146)</name>
    <dbReference type="NCBI Taxonomy" id="634503"/>
    <lineage>
        <taxon>Bacteria</taxon>
        <taxon>Pseudomonadati</taxon>
        <taxon>Pseudomonadota</taxon>
        <taxon>Gammaproteobacteria</taxon>
        <taxon>Enterobacterales</taxon>
        <taxon>Hafniaceae</taxon>
        <taxon>Edwardsiella</taxon>
    </lineage>
</organism>
<name>RL28_EDWI9</name>
<protein>
    <recommendedName>
        <fullName evidence="1">Large ribosomal subunit protein bL28</fullName>
    </recommendedName>
    <alternativeName>
        <fullName evidence="2">50S ribosomal protein L28</fullName>
    </alternativeName>
</protein>
<sequence length="78" mass="8946">MSRVCQVTGKRPVTGNNRSHALNATKRRFLPNLHSHRFWVEGEKRFVTLRVSAKGMRVIDKKGIEAVLADLRARGEKY</sequence>
<proteinExistence type="inferred from homology"/>
<feature type="chain" id="PRO_1000205597" description="Large ribosomal subunit protein bL28">
    <location>
        <begin position="1"/>
        <end position="78"/>
    </location>
</feature>
<keyword id="KW-0687">Ribonucleoprotein</keyword>
<keyword id="KW-0689">Ribosomal protein</keyword>
<evidence type="ECO:0000255" key="1">
    <source>
        <dbReference type="HAMAP-Rule" id="MF_00373"/>
    </source>
</evidence>
<evidence type="ECO:0000305" key="2"/>
<dbReference type="EMBL" id="CP001600">
    <property type="protein sequence ID" value="ACR67316.1"/>
    <property type="molecule type" value="Genomic_DNA"/>
</dbReference>
<dbReference type="RefSeq" id="WP_015460658.1">
    <property type="nucleotide sequence ID" value="NZ_CP169062.1"/>
</dbReference>
<dbReference type="SMR" id="C5B9D6"/>
<dbReference type="STRING" id="67780.B6E78_11435"/>
<dbReference type="GeneID" id="72526959"/>
<dbReference type="KEGG" id="eic:NT01EI_0056"/>
<dbReference type="HOGENOM" id="CLU_064548_3_1_6"/>
<dbReference type="OrthoDB" id="9805609at2"/>
<dbReference type="Proteomes" id="UP000001485">
    <property type="component" value="Chromosome"/>
</dbReference>
<dbReference type="GO" id="GO:0022625">
    <property type="term" value="C:cytosolic large ribosomal subunit"/>
    <property type="evidence" value="ECO:0007669"/>
    <property type="project" value="TreeGrafter"/>
</dbReference>
<dbReference type="GO" id="GO:0003735">
    <property type="term" value="F:structural constituent of ribosome"/>
    <property type="evidence" value="ECO:0007669"/>
    <property type="project" value="InterPro"/>
</dbReference>
<dbReference type="GO" id="GO:0006412">
    <property type="term" value="P:translation"/>
    <property type="evidence" value="ECO:0007669"/>
    <property type="project" value="UniProtKB-UniRule"/>
</dbReference>
<dbReference type="FunFam" id="2.30.170.40:FF:000001">
    <property type="entry name" value="50S ribosomal protein L28"/>
    <property type="match status" value="1"/>
</dbReference>
<dbReference type="Gene3D" id="2.30.170.40">
    <property type="entry name" value="Ribosomal protein L28/L24"/>
    <property type="match status" value="1"/>
</dbReference>
<dbReference type="HAMAP" id="MF_00373">
    <property type="entry name" value="Ribosomal_bL28"/>
    <property type="match status" value="1"/>
</dbReference>
<dbReference type="InterPro" id="IPR026569">
    <property type="entry name" value="Ribosomal_bL28"/>
</dbReference>
<dbReference type="InterPro" id="IPR034704">
    <property type="entry name" value="Ribosomal_bL28/bL31-like_sf"/>
</dbReference>
<dbReference type="InterPro" id="IPR001383">
    <property type="entry name" value="Ribosomal_bL28_bact-type"/>
</dbReference>
<dbReference type="InterPro" id="IPR037147">
    <property type="entry name" value="Ribosomal_bL28_sf"/>
</dbReference>
<dbReference type="NCBIfam" id="TIGR00009">
    <property type="entry name" value="L28"/>
    <property type="match status" value="1"/>
</dbReference>
<dbReference type="PANTHER" id="PTHR13528">
    <property type="entry name" value="39S RIBOSOMAL PROTEIN L28, MITOCHONDRIAL"/>
    <property type="match status" value="1"/>
</dbReference>
<dbReference type="PANTHER" id="PTHR13528:SF2">
    <property type="entry name" value="LARGE RIBOSOMAL SUBUNIT PROTEIN BL28M"/>
    <property type="match status" value="1"/>
</dbReference>
<dbReference type="Pfam" id="PF00830">
    <property type="entry name" value="Ribosomal_L28"/>
    <property type="match status" value="1"/>
</dbReference>
<dbReference type="SUPFAM" id="SSF143800">
    <property type="entry name" value="L28p-like"/>
    <property type="match status" value="1"/>
</dbReference>
<comment type="similarity">
    <text evidence="1">Belongs to the bacterial ribosomal protein bL28 family.</text>
</comment>
<reference key="1">
    <citation type="submission" date="2009-03" db="EMBL/GenBank/DDBJ databases">
        <title>Complete genome sequence of Edwardsiella ictaluri 93-146.</title>
        <authorList>
            <person name="Williams M.L."/>
            <person name="Gillaspy A.F."/>
            <person name="Dyer D.W."/>
            <person name="Thune R.L."/>
            <person name="Waldbieser G.C."/>
            <person name="Schuster S.C."/>
            <person name="Gipson J."/>
            <person name="Zaitshik J."/>
            <person name="Landry C."/>
            <person name="Lawrence M.L."/>
        </authorList>
    </citation>
    <scope>NUCLEOTIDE SEQUENCE [LARGE SCALE GENOMIC DNA]</scope>
    <source>
        <strain>93-146</strain>
    </source>
</reference>
<gene>
    <name evidence="1" type="primary">rpmB</name>
    <name type="ordered locus">NT01EI_0056</name>
</gene>